<feature type="chain" id="PRO_0000225229" description="Elongation factor G">
    <location>
        <begin position="1"/>
        <end position="715"/>
    </location>
</feature>
<feature type="domain" description="tr-type G">
    <location>
        <begin position="8"/>
        <end position="290"/>
    </location>
</feature>
<feature type="binding site" evidence="1">
    <location>
        <begin position="17"/>
        <end position="24"/>
    </location>
    <ligand>
        <name>GTP</name>
        <dbReference type="ChEBI" id="CHEBI:37565"/>
    </ligand>
</feature>
<feature type="binding site" evidence="1">
    <location>
        <begin position="88"/>
        <end position="92"/>
    </location>
    <ligand>
        <name>GTP</name>
        <dbReference type="ChEBI" id="CHEBI:37565"/>
    </ligand>
</feature>
<feature type="binding site" evidence="1">
    <location>
        <begin position="142"/>
        <end position="145"/>
    </location>
    <ligand>
        <name>GTP</name>
        <dbReference type="ChEBI" id="CHEBI:37565"/>
    </ligand>
</feature>
<organism>
    <name type="scientific">Pseudomonas fluorescens (strain ATCC BAA-477 / NRRL B-23932 / Pf-5)</name>
    <dbReference type="NCBI Taxonomy" id="220664"/>
    <lineage>
        <taxon>Bacteria</taxon>
        <taxon>Pseudomonadati</taxon>
        <taxon>Pseudomonadota</taxon>
        <taxon>Gammaproteobacteria</taxon>
        <taxon>Pseudomonadales</taxon>
        <taxon>Pseudomonadaceae</taxon>
        <taxon>Pseudomonas</taxon>
    </lineage>
</organism>
<proteinExistence type="inferred from homology"/>
<evidence type="ECO:0000255" key="1">
    <source>
        <dbReference type="HAMAP-Rule" id="MF_00054"/>
    </source>
</evidence>
<comment type="function">
    <text evidence="1">Catalyzes the GTP-dependent ribosomal translocation step during translation elongation. During this step, the ribosome changes from the pre-translocational (PRE) to the post-translocational (POST) state as the newly formed A-site-bound peptidyl-tRNA and P-site-bound deacylated tRNA move to the P and E sites, respectively. Catalyzes the coordinated movement of the two tRNA molecules, the mRNA and conformational changes in the ribosome.</text>
</comment>
<comment type="subcellular location">
    <subcellularLocation>
        <location evidence="1">Cytoplasm</location>
    </subcellularLocation>
</comment>
<comment type="similarity">
    <text evidence="1">Belongs to the TRAFAC class translation factor GTPase superfamily. Classic translation factor GTPase family. EF-G/EF-2 subfamily.</text>
</comment>
<sequence length="715" mass="78741">MARTTAINRYRNIGICAHVDAGKTTTTERILFYTGLSHKMGEVHDGAATTDWMVQEQERGITITSAAVTTFWKGSRGQYDNYRVNVIDTPGHVDFTIEVERSLRVLDGAVVVFCGTSGVEPQSETVWRQANKYGVPRVVYVNKMDRAGANFLRVVGQIKNRLGHTPVPVQLAIGAEDNFEGQVDLIKMKAIYWNDDDKGTTYREEEIPADMLDLANEWRSNMVEAAAEANEELMNKYLEEGDLTVEEIKAGLRARTLASEIVPAVCGSSFKNKGVPLVLDAVIDFLPAPTEIPAIKGIHPDLIEKPKDELVEADYDERHADDAEPFSALAFKIATDPFVGTLTFVRVYSGFLSSGDSVINSVKGKKERVGRMVQMHANQREEIKEVRAGDIAALIGMKDVTTGDTLCDLDKQIILERMDFPEPVISVAVEPKTKQDQEKMGIALGKLAQEDPSFRVKTDEETGQTIISGMGELHLDILVDRMKREFNVEANIGKPQVSYREKISKSNVEIEGKFVRQSGGRGQFGHCWIRFSEPDVDANGNITEGLVFTNEVVGGVVPKEYIPAIQKGIEEQMKNGVVAGYPLIGLKATVFDGSYHDVDSNEMAFKVAASMATKQLAQKGGGVVLEPIMKVEVVTPEDYMGDVMGDLNRRRGLIQGMDDSVSGKVIRAEVPLGEMFGYATDVRSMSQGRASYSMEFSKYAEAPSNIVEALVKKQG</sequence>
<name>EFG_PSEF5</name>
<keyword id="KW-0963">Cytoplasm</keyword>
<keyword id="KW-0251">Elongation factor</keyword>
<keyword id="KW-0342">GTP-binding</keyword>
<keyword id="KW-0547">Nucleotide-binding</keyword>
<keyword id="KW-0648">Protein biosynthesis</keyword>
<accession>Q4K530</accession>
<reference key="1">
    <citation type="journal article" date="2005" name="Nat. Biotechnol.">
        <title>Complete genome sequence of the plant commensal Pseudomonas fluorescens Pf-5.</title>
        <authorList>
            <person name="Paulsen I.T."/>
            <person name="Press C.M."/>
            <person name="Ravel J."/>
            <person name="Kobayashi D.Y."/>
            <person name="Myers G.S.A."/>
            <person name="Mavrodi D.V."/>
            <person name="DeBoy R.T."/>
            <person name="Seshadri R."/>
            <person name="Ren Q."/>
            <person name="Madupu R."/>
            <person name="Dodson R.J."/>
            <person name="Durkin A.S."/>
            <person name="Brinkac L.M."/>
            <person name="Daugherty S.C."/>
            <person name="Sullivan S.A."/>
            <person name="Rosovitz M.J."/>
            <person name="Gwinn M.L."/>
            <person name="Zhou L."/>
            <person name="Schneider D.J."/>
            <person name="Cartinhour S.W."/>
            <person name="Nelson W.C."/>
            <person name="Weidman J."/>
            <person name="Watkins K."/>
            <person name="Tran K."/>
            <person name="Khouri H."/>
            <person name="Pierson E.A."/>
            <person name="Pierson L.S. III"/>
            <person name="Thomashow L.S."/>
            <person name="Loper J.E."/>
        </authorList>
    </citation>
    <scope>NUCLEOTIDE SEQUENCE [LARGE SCALE GENOMIC DNA]</scope>
    <source>
        <strain>ATCC BAA-477 / NRRL B-23932 / Pf-5</strain>
    </source>
</reference>
<gene>
    <name evidence="1" type="primary">fusA</name>
    <name type="ordered locus">PFL_5585</name>
</gene>
<dbReference type="EMBL" id="CP000076">
    <property type="protein sequence ID" value="AAY94790.1"/>
    <property type="molecule type" value="Genomic_DNA"/>
</dbReference>
<dbReference type="RefSeq" id="WP_011063777.1">
    <property type="nucleotide sequence ID" value="NC_004129.6"/>
</dbReference>
<dbReference type="SMR" id="Q4K530"/>
<dbReference type="STRING" id="220664.PFL_5585"/>
<dbReference type="GeneID" id="57478534"/>
<dbReference type="KEGG" id="pfl:PFL_5585"/>
<dbReference type="PATRIC" id="fig|220664.5.peg.5703"/>
<dbReference type="eggNOG" id="COG0480">
    <property type="taxonomic scope" value="Bacteria"/>
</dbReference>
<dbReference type="HOGENOM" id="CLU_002794_4_1_6"/>
<dbReference type="Proteomes" id="UP000008540">
    <property type="component" value="Chromosome"/>
</dbReference>
<dbReference type="GO" id="GO:0005737">
    <property type="term" value="C:cytoplasm"/>
    <property type="evidence" value="ECO:0007669"/>
    <property type="project" value="UniProtKB-SubCell"/>
</dbReference>
<dbReference type="GO" id="GO:0005525">
    <property type="term" value="F:GTP binding"/>
    <property type="evidence" value="ECO:0007669"/>
    <property type="project" value="UniProtKB-UniRule"/>
</dbReference>
<dbReference type="GO" id="GO:0003924">
    <property type="term" value="F:GTPase activity"/>
    <property type="evidence" value="ECO:0007669"/>
    <property type="project" value="InterPro"/>
</dbReference>
<dbReference type="GO" id="GO:0097216">
    <property type="term" value="F:guanosine tetraphosphate binding"/>
    <property type="evidence" value="ECO:0007669"/>
    <property type="project" value="UniProtKB-ARBA"/>
</dbReference>
<dbReference type="GO" id="GO:0003746">
    <property type="term" value="F:translation elongation factor activity"/>
    <property type="evidence" value="ECO:0007669"/>
    <property type="project" value="UniProtKB-UniRule"/>
</dbReference>
<dbReference type="GO" id="GO:0032790">
    <property type="term" value="P:ribosome disassembly"/>
    <property type="evidence" value="ECO:0007669"/>
    <property type="project" value="TreeGrafter"/>
</dbReference>
<dbReference type="CDD" id="cd01886">
    <property type="entry name" value="EF-G"/>
    <property type="match status" value="1"/>
</dbReference>
<dbReference type="CDD" id="cd16262">
    <property type="entry name" value="EFG_III"/>
    <property type="match status" value="1"/>
</dbReference>
<dbReference type="CDD" id="cd01434">
    <property type="entry name" value="EFG_mtEFG1_IV"/>
    <property type="match status" value="1"/>
</dbReference>
<dbReference type="CDD" id="cd03713">
    <property type="entry name" value="EFG_mtEFG_C"/>
    <property type="match status" value="1"/>
</dbReference>
<dbReference type="CDD" id="cd04088">
    <property type="entry name" value="EFG_mtEFG_II"/>
    <property type="match status" value="1"/>
</dbReference>
<dbReference type="FunFam" id="2.40.30.10:FF:000006">
    <property type="entry name" value="Elongation factor G"/>
    <property type="match status" value="1"/>
</dbReference>
<dbReference type="FunFam" id="3.30.230.10:FF:000003">
    <property type="entry name" value="Elongation factor G"/>
    <property type="match status" value="1"/>
</dbReference>
<dbReference type="FunFam" id="3.30.70.240:FF:000001">
    <property type="entry name" value="Elongation factor G"/>
    <property type="match status" value="1"/>
</dbReference>
<dbReference type="FunFam" id="3.30.70.870:FF:000001">
    <property type="entry name" value="Elongation factor G"/>
    <property type="match status" value="1"/>
</dbReference>
<dbReference type="FunFam" id="3.40.50.300:FF:000029">
    <property type="entry name" value="Elongation factor G"/>
    <property type="match status" value="1"/>
</dbReference>
<dbReference type="Gene3D" id="3.30.230.10">
    <property type="match status" value="1"/>
</dbReference>
<dbReference type="Gene3D" id="3.30.70.240">
    <property type="match status" value="1"/>
</dbReference>
<dbReference type="Gene3D" id="3.30.70.870">
    <property type="entry name" value="Elongation Factor G (Translational Gtpase), domain 3"/>
    <property type="match status" value="1"/>
</dbReference>
<dbReference type="Gene3D" id="3.40.50.300">
    <property type="entry name" value="P-loop containing nucleotide triphosphate hydrolases"/>
    <property type="match status" value="1"/>
</dbReference>
<dbReference type="Gene3D" id="2.40.30.10">
    <property type="entry name" value="Translation factors"/>
    <property type="match status" value="1"/>
</dbReference>
<dbReference type="HAMAP" id="MF_00054_B">
    <property type="entry name" value="EF_G_EF_2_B"/>
    <property type="match status" value="1"/>
</dbReference>
<dbReference type="InterPro" id="IPR041095">
    <property type="entry name" value="EFG_II"/>
</dbReference>
<dbReference type="InterPro" id="IPR009022">
    <property type="entry name" value="EFG_III"/>
</dbReference>
<dbReference type="InterPro" id="IPR035647">
    <property type="entry name" value="EFG_III/V"/>
</dbReference>
<dbReference type="InterPro" id="IPR047872">
    <property type="entry name" value="EFG_IV"/>
</dbReference>
<dbReference type="InterPro" id="IPR035649">
    <property type="entry name" value="EFG_V"/>
</dbReference>
<dbReference type="InterPro" id="IPR000640">
    <property type="entry name" value="EFG_V-like"/>
</dbReference>
<dbReference type="InterPro" id="IPR004161">
    <property type="entry name" value="EFTu-like_2"/>
</dbReference>
<dbReference type="InterPro" id="IPR031157">
    <property type="entry name" value="G_TR_CS"/>
</dbReference>
<dbReference type="InterPro" id="IPR027417">
    <property type="entry name" value="P-loop_NTPase"/>
</dbReference>
<dbReference type="InterPro" id="IPR020568">
    <property type="entry name" value="Ribosomal_Su5_D2-typ_SF"/>
</dbReference>
<dbReference type="InterPro" id="IPR014721">
    <property type="entry name" value="Ribsml_uS5_D2-typ_fold_subgr"/>
</dbReference>
<dbReference type="InterPro" id="IPR005225">
    <property type="entry name" value="Small_GTP-bd"/>
</dbReference>
<dbReference type="InterPro" id="IPR000795">
    <property type="entry name" value="T_Tr_GTP-bd_dom"/>
</dbReference>
<dbReference type="InterPro" id="IPR009000">
    <property type="entry name" value="Transl_B-barrel_sf"/>
</dbReference>
<dbReference type="InterPro" id="IPR004540">
    <property type="entry name" value="Transl_elong_EFG/EF2"/>
</dbReference>
<dbReference type="InterPro" id="IPR005517">
    <property type="entry name" value="Transl_elong_EFG/EF2_IV"/>
</dbReference>
<dbReference type="NCBIfam" id="TIGR00484">
    <property type="entry name" value="EF-G"/>
    <property type="match status" value="1"/>
</dbReference>
<dbReference type="NCBIfam" id="NF009381">
    <property type="entry name" value="PRK12740.1-5"/>
    <property type="match status" value="1"/>
</dbReference>
<dbReference type="NCBIfam" id="TIGR00231">
    <property type="entry name" value="small_GTP"/>
    <property type="match status" value="1"/>
</dbReference>
<dbReference type="PANTHER" id="PTHR43261:SF1">
    <property type="entry name" value="RIBOSOME-RELEASING FACTOR 2, MITOCHONDRIAL"/>
    <property type="match status" value="1"/>
</dbReference>
<dbReference type="PANTHER" id="PTHR43261">
    <property type="entry name" value="TRANSLATION ELONGATION FACTOR G-RELATED"/>
    <property type="match status" value="1"/>
</dbReference>
<dbReference type="Pfam" id="PF00679">
    <property type="entry name" value="EFG_C"/>
    <property type="match status" value="1"/>
</dbReference>
<dbReference type="Pfam" id="PF14492">
    <property type="entry name" value="EFG_III"/>
    <property type="match status" value="1"/>
</dbReference>
<dbReference type="Pfam" id="PF03764">
    <property type="entry name" value="EFG_IV"/>
    <property type="match status" value="1"/>
</dbReference>
<dbReference type="Pfam" id="PF00009">
    <property type="entry name" value="GTP_EFTU"/>
    <property type="match status" value="1"/>
</dbReference>
<dbReference type="Pfam" id="PF03144">
    <property type="entry name" value="GTP_EFTU_D2"/>
    <property type="match status" value="1"/>
</dbReference>
<dbReference type="PRINTS" id="PR00315">
    <property type="entry name" value="ELONGATNFCT"/>
</dbReference>
<dbReference type="SMART" id="SM00838">
    <property type="entry name" value="EFG_C"/>
    <property type="match status" value="1"/>
</dbReference>
<dbReference type="SMART" id="SM00889">
    <property type="entry name" value="EFG_IV"/>
    <property type="match status" value="1"/>
</dbReference>
<dbReference type="SUPFAM" id="SSF54980">
    <property type="entry name" value="EF-G C-terminal domain-like"/>
    <property type="match status" value="2"/>
</dbReference>
<dbReference type="SUPFAM" id="SSF52540">
    <property type="entry name" value="P-loop containing nucleoside triphosphate hydrolases"/>
    <property type="match status" value="1"/>
</dbReference>
<dbReference type="SUPFAM" id="SSF54211">
    <property type="entry name" value="Ribosomal protein S5 domain 2-like"/>
    <property type="match status" value="1"/>
</dbReference>
<dbReference type="SUPFAM" id="SSF50447">
    <property type="entry name" value="Translation proteins"/>
    <property type="match status" value="1"/>
</dbReference>
<dbReference type="PROSITE" id="PS00301">
    <property type="entry name" value="G_TR_1"/>
    <property type="match status" value="1"/>
</dbReference>
<dbReference type="PROSITE" id="PS51722">
    <property type="entry name" value="G_TR_2"/>
    <property type="match status" value="1"/>
</dbReference>
<protein>
    <recommendedName>
        <fullName evidence="1">Elongation factor G</fullName>
        <shortName evidence="1">EF-G</shortName>
    </recommendedName>
</protein>